<protein>
    <recommendedName>
        <fullName>Cystatin-B</fullName>
    </recommendedName>
    <alternativeName>
        <fullName>Stefin-B</fullName>
    </alternativeName>
</protein>
<organism>
    <name type="scientific">Sus scrofa</name>
    <name type="common">Pig</name>
    <dbReference type="NCBI Taxonomy" id="9823"/>
    <lineage>
        <taxon>Eukaryota</taxon>
        <taxon>Metazoa</taxon>
        <taxon>Chordata</taxon>
        <taxon>Craniata</taxon>
        <taxon>Vertebrata</taxon>
        <taxon>Euteleostomi</taxon>
        <taxon>Mammalia</taxon>
        <taxon>Eutheria</taxon>
        <taxon>Laurasiatheria</taxon>
        <taxon>Artiodactyla</taxon>
        <taxon>Suina</taxon>
        <taxon>Suidae</taxon>
        <taxon>Sus</taxon>
    </lineage>
</organism>
<gene>
    <name type="primary">CSTB</name>
    <name type="synonym">CST6</name>
    <name type="synonym">STFB</name>
</gene>
<name>CYTB_PIG</name>
<feature type="chain" id="PRO_0000207142" description="Cystatin-B">
    <location>
        <begin position="1"/>
        <end position="98"/>
    </location>
</feature>
<feature type="short sequence motif" description="Secondary area of contact" evidence="1">
    <location>
        <begin position="46"/>
        <end position="50"/>
    </location>
</feature>
<feature type="site" description="Reactive site" evidence="1">
    <location>
        <position position="4"/>
    </location>
</feature>
<feature type="modified residue" description="N-acetylmethionine" evidence="2">
    <location>
        <position position="1"/>
    </location>
</feature>
<reference key="1">
    <citation type="journal article" date="1996" name="FEBS Lett.">
        <title>Differences in specificity for the interactions of stefins A, B and D with cysteine proteinases.</title>
        <authorList>
            <person name="Lenarcic B."/>
            <person name="Krizaj I."/>
            <person name="Zunec P."/>
            <person name="Turk V."/>
        </authorList>
    </citation>
    <scope>PROTEIN SEQUENCE</scope>
    <scope>ACETYLATION AT MET-1</scope>
    <source>
        <tissue>Thymus</tissue>
    </source>
</reference>
<reference key="2">
    <citation type="journal article" date="1996" name="Mamm. Genome">
        <title>Evaluation and characterization of a porcine small intestine cDNA library: analysis of 839 clones.</title>
        <authorList>
            <person name="Winteroe A.K."/>
            <person name="Fredholm M."/>
            <person name="Davies W."/>
        </authorList>
    </citation>
    <scope>NUCLEOTIDE SEQUENCE [LARGE SCALE MRNA] OF 49-98</scope>
    <source>
        <tissue>Small intestine</tissue>
    </source>
</reference>
<keyword id="KW-0007">Acetylation</keyword>
<keyword id="KW-0963">Cytoplasm</keyword>
<keyword id="KW-0903">Direct protein sequencing</keyword>
<keyword id="KW-0646">Protease inhibitor</keyword>
<keyword id="KW-1185">Reference proteome</keyword>
<keyword id="KW-0789">Thiol protease inhibitor</keyword>
<comment type="function">
    <text>This is an intracellular thiol proteinase inhibitor.</text>
</comment>
<comment type="subcellular location">
    <subcellularLocation>
        <location>Cytoplasm</location>
    </subcellularLocation>
</comment>
<comment type="similarity">
    <text evidence="3">Belongs to the cystatin family.</text>
</comment>
<accession>Q29290</accession>
<dbReference type="EMBL" id="F14641">
    <property type="protein sequence ID" value="CAA23174.1"/>
    <property type="molecule type" value="mRNA"/>
</dbReference>
<dbReference type="SMR" id="Q29290"/>
<dbReference type="FunCoup" id="Q29290">
    <property type="interactions" value="835"/>
</dbReference>
<dbReference type="STRING" id="9823.ENSSSCP00000021841"/>
<dbReference type="MEROPS" id="I25.003"/>
<dbReference type="iPTMnet" id="Q29290"/>
<dbReference type="PaxDb" id="9823-ENSSSCP00000021841"/>
<dbReference type="PeptideAtlas" id="Q29290"/>
<dbReference type="Ensembl" id="ENSSSCT00000023178.3">
    <property type="protein sequence ID" value="ENSSSCP00000021841.2"/>
    <property type="gene ID" value="ENSSSCG00000027357.3"/>
</dbReference>
<dbReference type="Ensembl" id="ENSSSCT00025012535.1">
    <property type="protein sequence ID" value="ENSSSCP00025004962.1"/>
    <property type="gene ID" value="ENSSSCG00025009470.1"/>
</dbReference>
<dbReference type="Ensembl" id="ENSSSCT00035022666.1">
    <property type="protein sequence ID" value="ENSSSCP00035008343.1"/>
    <property type="gene ID" value="ENSSSCG00035017614.1"/>
</dbReference>
<dbReference type="Ensembl" id="ENSSSCT00045031108.1">
    <property type="protein sequence ID" value="ENSSSCP00045021566.1"/>
    <property type="gene ID" value="ENSSSCG00045018269.1"/>
</dbReference>
<dbReference type="Ensembl" id="ENSSSCT00055039725.1">
    <property type="protein sequence ID" value="ENSSSCP00055031599.1"/>
    <property type="gene ID" value="ENSSSCG00055020262.1"/>
</dbReference>
<dbReference type="Ensembl" id="ENSSSCT00070015906.1">
    <property type="protein sequence ID" value="ENSSSCP00070013153.1"/>
    <property type="gene ID" value="ENSSSCG00070008242.1"/>
</dbReference>
<dbReference type="Ensembl" id="ENSSSCT00090046197">
    <property type="protein sequence ID" value="ENSSSCP00090028584"/>
    <property type="gene ID" value="ENSSSCG00090026177"/>
</dbReference>
<dbReference type="Ensembl" id="ENSSSCT00105051814">
    <property type="protein sequence ID" value="ENSSSCP00105036473"/>
    <property type="gene ID" value="ENSSSCG00105027277"/>
</dbReference>
<dbReference type="Ensembl" id="ENSSSCT00110037214">
    <property type="protein sequence ID" value="ENSSSCP00110025588"/>
    <property type="gene ID" value="ENSSSCG00110019398"/>
</dbReference>
<dbReference type="Ensembl" id="ENSSSCT00115011914">
    <property type="protein sequence ID" value="ENSSSCP00115011248"/>
    <property type="gene ID" value="ENSSSCG00115006845"/>
</dbReference>
<dbReference type="VGNC" id="VGNC:97952">
    <property type="gene designation" value="CSTB"/>
</dbReference>
<dbReference type="eggNOG" id="ENOG502SF2X">
    <property type="taxonomic scope" value="Eukaryota"/>
</dbReference>
<dbReference type="GeneTree" id="ENSGT00940000154826"/>
<dbReference type="InParanoid" id="Q29290"/>
<dbReference type="OMA" id="HVGNEEY"/>
<dbReference type="Reactome" id="R-SSC-6798695">
    <property type="pathway name" value="Neutrophil degranulation"/>
</dbReference>
<dbReference type="Proteomes" id="UP000008227">
    <property type="component" value="Chromosome 13"/>
</dbReference>
<dbReference type="Proteomes" id="UP000314985">
    <property type="component" value="Chromosome 13"/>
</dbReference>
<dbReference type="Proteomes" id="UP000694570">
    <property type="component" value="Unplaced"/>
</dbReference>
<dbReference type="Proteomes" id="UP000694571">
    <property type="component" value="Unplaced"/>
</dbReference>
<dbReference type="Proteomes" id="UP000694720">
    <property type="component" value="Unplaced"/>
</dbReference>
<dbReference type="Proteomes" id="UP000694722">
    <property type="component" value="Unplaced"/>
</dbReference>
<dbReference type="Proteomes" id="UP000694723">
    <property type="component" value="Unplaced"/>
</dbReference>
<dbReference type="Proteomes" id="UP000694724">
    <property type="component" value="Unplaced"/>
</dbReference>
<dbReference type="Proteomes" id="UP000694725">
    <property type="component" value="Unplaced"/>
</dbReference>
<dbReference type="Proteomes" id="UP000694726">
    <property type="component" value="Unplaced"/>
</dbReference>
<dbReference type="Proteomes" id="UP000694727">
    <property type="component" value="Unplaced"/>
</dbReference>
<dbReference type="Proteomes" id="UP000694728">
    <property type="component" value="Unplaced"/>
</dbReference>
<dbReference type="Bgee" id="ENSSSCG00000027357">
    <property type="expression patterns" value="Expressed in subcutaneous adipose tissue and 43 other cell types or tissues"/>
</dbReference>
<dbReference type="GO" id="GO:0005829">
    <property type="term" value="C:cytosol"/>
    <property type="evidence" value="ECO:0000318"/>
    <property type="project" value="GO_Central"/>
</dbReference>
<dbReference type="GO" id="GO:0005615">
    <property type="term" value="C:extracellular space"/>
    <property type="evidence" value="ECO:0007669"/>
    <property type="project" value="Ensembl"/>
</dbReference>
<dbReference type="GO" id="GO:0005730">
    <property type="term" value="C:nucleolus"/>
    <property type="evidence" value="ECO:0007669"/>
    <property type="project" value="Ensembl"/>
</dbReference>
<dbReference type="GO" id="GO:0004869">
    <property type="term" value="F:cysteine-type endopeptidase inhibitor activity"/>
    <property type="evidence" value="ECO:0000318"/>
    <property type="project" value="GO_Central"/>
</dbReference>
<dbReference type="GO" id="GO:0002020">
    <property type="term" value="F:protease binding"/>
    <property type="evidence" value="ECO:0007669"/>
    <property type="project" value="Ensembl"/>
</dbReference>
<dbReference type="GO" id="GO:0008344">
    <property type="term" value="P:adult locomotory behavior"/>
    <property type="evidence" value="ECO:0007669"/>
    <property type="project" value="Ensembl"/>
</dbReference>
<dbReference type="GO" id="GO:1990000">
    <property type="term" value="P:amyloid fibril formation"/>
    <property type="evidence" value="ECO:0007669"/>
    <property type="project" value="Ensembl"/>
</dbReference>
<dbReference type="GO" id="GO:0045861">
    <property type="term" value="P:negative regulation of proteolysis"/>
    <property type="evidence" value="ECO:0007669"/>
    <property type="project" value="Ensembl"/>
</dbReference>
<dbReference type="CDD" id="cd00042">
    <property type="entry name" value="CY"/>
    <property type="match status" value="1"/>
</dbReference>
<dbReference type="FunFam" id="3.10.450.10:FF:000001">
    <property type="entry name" value="Cystatin-A"/>
    <property type="match status" value="1"/>
</dbReference>
<dbReference type="Gene3D" id="3.10.450.10">
    <property type="match status" value="1"/>
</dbReference>
<dbReference type="InterPro" id="IPR000010">
    <property type="entry name" value="Cystatin_dom"/>
</dbReference>
<dbReference type="InterPro" id="IPR046350">
    <property type="entry name" value="Cystatin_sf"/>
</dbReference>
<dbReference type="InterPro" id="IPR018073">
    <property type="entry name" value="Prot_inh_cystat_CS"/>
</dbReference>
<dbReference type="InterPro" id="IPR001713">
    <property type="entry name" value="Prot_inh_stefin"/>
</dbReference>
<dbReference type="PANTHER" id="PTHR11414">
    <property type="entry name" value="CYSTATIN FAMILY MEMBER"/>
    <property type="match status" value="1"/>
</dbReference>
<dbReference type="PANTHER" id="PTHR11414:SF22">
    <property type="entry name" value="CYSTATIN-B"/>
    <property type="match status" value="1"/>
</dbReference>
<dbReference type="Pfam" id="PF00031">
    <property type="entry name" value="Cystatin"/>
    <property type="match status" value="1"/>
</dbReference>
<dbReference type="PRINTS" id="PR00295">
    <property type="entry name" value="STEFINA"/>
</dbReference>
<dbReference type="SMART" id="SM00043">
    <property type="entry name" value="CY"/>
    <property type="match status" value="1"/>
</dbReference>
<dbReference type="SUPFAM" id="SSF54403">
    <property type="entry name" value="Cystatin/monellin"/>
    <property type="match status" value="1"/>
</dbReference>
<dbReference type="PROSITE" id="PS00287">
    <property type="entry name" value="CYSTATIN"/>
    <property type="match status" value="1"/>
</dbReference>
<proteinExistence type="evidence at protein level"/>
<sequence>MMCGAPSATQPATAEIQAIADKVKSQLEEKENKTFPVFKAVEFKSQVVAGRNLFIKVQVDDDDFVHLRVFESLPHENKPLTLSSYQTNKSRHDELTYF</sequence>
<evidence type="ECO:0000250" key="1"/>
<evidence type="ECO:0000269" key="2">
    <source>
    </source>
</evidence>
<evidence type="ECO:0000305" key="3"/>